<feature type="chain" id="PRO_0000450506" description="Siroheme decarboxylase beta subunit">
    <location>
        <begin position="1"/>
        <end position="158"/>
    </location>
</feature>
<dbReference type="EC" id="4.1.1.111" evidence="1"/>
<dbReference type="EMBL" id="CP000112">
    <property type="protein sequence ID" value="ABB39973.1"/>
    <property type="molecule type" value="Genomic_DNA"/>
</dbReference>
<dbReference type="RefSeq" id="WP_011368927.1">
    <property type="nucleotide sequence ID" value="NC_007519.1"/>
</dbReference>
<dbReference type="SMR" id="Q30WH3"/>
<dbReference type="STRING" id="207559.Dde_3179"/>
<dbReference type="DNASU" id="3758154"/>
<dbReference type="KEGG" id="dde:Dde_3179"/>
<dbReference type="eggNOG" id="COG1522">
    <property type="taxonomic scope" value="Bacteria"/>
</dbReference>
<dbReference type="HOGENOM" id="CLU_112007_0_1_7"/>
<dbReference type="UniPathway" id="UPA00252"/>
<dbReference type="Proteomes" id="UP000002710">
    <property type="component" value="Chromosome"/>
</dbReference>
<dbReference type="GO" id="GO:0016829">
    <property type="term" value="F:lyase activity"/>
    <property type="evidence" value="ECO:0007669"/>
    <property type="project" value="UniProtKB-KW"/>
</dbReference>
<dbReference type="GO" id="GO:0006783">
    <property type="term" value="P:heme biosynthetic process"/>
    <property type="evidence" value="ECO:0007669"/>
    <property type="project" value="UniProtKB-KW"/>
</dbReference>
<dbReference type="Gene3D" id="3.30.70.3460">
    <property type="match status" value="1"/>
</dbReference>
<dbReference type="InterPro" id="IPR053431">
    <property type="entry name" value="AhbB-like"/>
</dbReference>
<dbReference type="InterPro" id="IPR040523">
    <property type="entry name" value="AsnC_trans_reg2"/>
</dbReference>
<dbReference type="InterPro" id="IPR050684">
    <property type="entry name" value="HTH-Siroheme_Decarb"/>
</dbReference>
<dbReference type="InterPro" id="IPR053953">
    <property type="entry name" value="NirdL-like_HTH"/>
</dbReference>
<dbReference type="InterPro" id="IPR019888">
    <property type="entry name" value="Tscrpt_reg_AsnC-like"/>
</dbReference>
<dbReference type="InterPro" id="IPR036390">
    <property type="entry name" value="WH_DNA-bd_sf"/>
</dbReference>
<dbReference type="NCBIfam" id="NF040707">
    <property type="entry name" value="Siroheme_Dcarb_AhbB"/>
    <property type="match status" value="1"/>
</dbReference>
<dbReference type="PANTHER" id="PTHR43413:SF1">
    <property type="entry name" value="SIROHEME DECARBOXYLASE NIRL SUBUNIT"/>
    <property type="match status" value="1"/>
</dbReference>
<dbReference type="PANTHER" id="PTHR43413">
    <property type="entry name" value="TRANSCRIPTIONAL REGULATOR, ASNC FAMILY"/>
    <property type="match status" value="1"/>
</dbReference>
<dbReference type="Pfam" id="PF17805">
    <property type="entry name" value="AsnC_trans_reg2"/>
    <property type="match status" value="1"/>
</dbReference>
<dbReference type="Pfam" id="PF22451">
    <property type="entry name" value="NirdL-like_HTH"/>
    <property type="match status" value="1"/>
</dbReference>
<dbReference type="SMART" id="SM00344">
    <property type="entry name" value="HTH_ASNC"/>
    <property type="match status" value="1"/>
</dbReference>
<dbReference type="SUPFAM" id="SSF46785">
    <property type="entry name" value="Winged helix' DNA-binding domain"/>
    <property type="match status" value="1"/>
</dbReference>
<accession>Q30WH3</accession>
<evidence type="ECO:0000269" key="1">
    <source>
    </source>
</evidence>
<evidence type="ECO:0000303" key="2">
    <source>
    </source>
</evidence>
<evidence type="ECO:0000305" key="3"/>
<evidence type="ECO:0000312" key="4">
    <source>
        <dbReference type="EMBL" id="ABB39973.1"/>
    </source>
</evidence>
<proteinExistence type="evidence at protein level"/>
<protein>
    <recommendedName>
        <fullName evidence="3">Siroheme decarboxylase beta subunit</fullName>
        <ecNumber evidence="1">4.1.1.111</ecNumber>
    </recommendedName>
</protein>
<name>AHBB_OLEA2</name>
<gene>
    <name evidence="2" type="primary">ahbB</name>
    <name evidence="4" type="ordered locus">Dde_3179</name>
</gene>
<sequence>MAQTFTDTERAILRIVQKNLPDSATPYADIAEQTGTDEQTVLALLRRMKEEGSIRRFGASLKHQKAGYTHNAMVAWIVDKDTVDEVGRQAAEHRLISHVYYRPSTAPDWPYTLYTMIHGRHENEYLEVIDTLRKETALEEYAVLNSLKELKKTSMTYF</sequence>
<comment type="function">
    <text evidence="1">Involved in siroheme-dependent heme b biosynthesis. Catalyzes the decarboxylation of siroheme into didecarboxysiroheme.</text>
</comment>
<comment type="catalytic activity">
    <reaction evidence="1">
        <text>siroheme + 2 H(+) = 12,18-didecarboxysiroheme + 2 CO2</text>
        <dbReference type="Rhea" id="RHEA:19093"/>
        <dbReference type="ChEBI" id="CHEBI:15378"/>
        <dbReference type="ChEBI" id="CHEBI:16526"/>
        <dbReference type="ChEBI" id="CHEBI:60052"/>
        <dbReference type="ChEBI" id="CHEBI:140497"/>
        <dbReference type="EC" id="4.1.1.111"/>
    </reaction>
</comment>
<comment type="pathway">
    <text evidence="1">Porphyrin-containing compound metabolism; protoheme biosynthesis.</text>
</comment>
<comment type="subunit">
    <text evidence="1">Forms a heterodimer composed of AhbA and AhbB.</text>
</comment>
<comment type="similarity">
    <text evidence="3">Belongs to the Ahb/Nir family.</text>
</comment>
<organism>
    <name type="scientific">Oleidesulfovibrio alaskensis (strain ATCC BAA-1058 / DSM 17464 / G20)</name>
    <name type="common">Desulfovibrio alaskensis</name>
    <dbReference type="NCBI Taxonomy" id="207559"/>
    <lineage>
        <taxon>Bacteria</taxon>
        <taxon>Pseudomonadati</taxon>
        <taxon>Thermodesulfobacteriota</taxon>
        <taxon>Desulfovibrionia</taxon>
        <taxon>Desulfovibrionales</taxon>
        <taxon>Desulfovibrionaceae</taxon>
        <taxon>Oleidesulfovibrio</taxon>
    </lineage>
</organism>
<keyword id="KW-0350">Heme biosynthesis</keyword>
<keyword id="KW-0456">Lyase</keyword>
<keyword id="KW-1185">Reference proteome</keyword>
<reference key="1">
    <citation type="journal article" date="2011" name="J. Bacteriol.">
        <title>Complete genome sequence and updated annotation of Desulfovibrio alaskensis G20.</title>
        <authorList>
            <person name="Hauser L.J."/>
            <person name="Land M.L."/>
            <person name="Brown S.D."/>
            <person name="Larimer F."/>
            <person name="Keller K.L."/>
            <person name="Rapp-Giles B.J."/>
            <person name="Price M.N."/>
            <person name="Lin M."/>
            <person name="Bruce D.C."/>
            <person name="Detter J.C."/>
            <person name="Tapia R."/>
            <person name="Han C.S."/>
            <person name="Goodwin L.A."/>
            <person name="Cheng J.F."/>
            <person name="Pitluck S."/>
            <person name="Copeland A."/>
            <person name="Lucas S."/>
            <person name="Nolan M."/>
            <person name="Lapidus A.L."/>
            <person name="Palumbo A.V."/>
            <person name="Wall J.D."/>
        </authorList>
    </citation>
    <scope>NUCLEOTIDE SEQUENCE [LARGE SCALE GENOMIC DNA]</scope>
    <source>
        <strain>ATCC BAA-1058 / DSM 17464 / G20</strain>
    </source>
</reference>
<reference key="2">
    <citation type="journal article" date="2011" name="Proc. Natl. Acad. Sci. U.S.A.">
        <title>Molecular hijacking of siroheme for the synthesis of heme and d1 heme.</title>
        <authorList>
            <person name="Bali S."/>
            <person name="Lawrence A.D."/>
            <person name="Lobo S.A."/>
            <person name="Saraiva L.M."/>
            <person name="Golding B.T."/>
            <person name="Palmer D.J."/>
            <person name="Howard M.J."/>
            <person name="Ferguson S.J."/>
            <person name="Warren M.J."/>
        </authorList>
    </citation>
    <scope>FUNCTION</scope>
    <scope>CATALYTIC ACTIVITY</scope>
    <scope>PATHWAY</scope>
    <scope>SUBUNIT</scope>
    <source>
        <strain>ATCC BAA-1058 / DSM 17464 / G20</strain>
    </source>
</reference>